<proteinExistence type="inferred from homology"/>
<feature type="chain" id="PRO_0000212427" description="Pre-mRNA-splicing factor slt11">
    <location>
        <begin position="1"/>
        <end position="377"/>
    </location>
</feature>
<feature type="domain" description="RRM" evidence="2">
    <location>
        <begin position="237"/>
        <end position="310"/>
    </location>
</feature>
<feature type="region of interest" description="Disordered" evidence="3">
    <location>
        <begin position="155"/>
        <end position="232"/>
    </location>
</feature>
<feature type="region of interest" description="Disordered" evidence="3">
    <location>
        <begin position="333"/>
        <end position="377"/>
    </location>
</feature>
<reference key="1">
    <citation type="journal article" date="2005" name="Nature">
        <title>Sequencing of Aspergillus nidulans and comparative analysis with A. fumigatus and A. oryzae.</title>
        <authorList>
            <person name="Galagan J.E."/>
            <person name="Calvo S.E."/>
            <person name="Cuomo C."/>
            <person name="Ma L.-J."/>
            <person name="Wortman J.R."/>
            <person name="Batzoglou S."/>
            <person name="Lee S.-I."/>
            <person name="Bastuerkmen M."/>
            <person name="Spevak C.C."/>
            <person name="Clutterbuck J."/>
            <person name="Kapitonov V."/>
            <person name="Jurka J."/>
            <person name="Scazzocchio C."/>
            <person name="Farman M.L."/>
            <person name="Butler J."/>
            <person name="Purcell S."/>
            <person name="Harris S."/>
            <person name="Braus G.H."/>
            <person name="Draht O."/>
            <person name="Busch S."/>
            <person name="D'Enfert C."/>
            <person name="Bouchier C."/>
            <person name="Goldman G.H."/>
            <person name="Bell-Pedersen D."/>
            <person name="Griffiths-Jones S."/>
            <person name="Doonan J.H."/>
            <person name="Yu J."/>
            <person name="Vienken K."/>
            <person name="Pain A."/>
            <person name="Freitag M."/>
            <person name="Selker E.U."/>
            <person name="Archer D.B."/>
            <person name="Penalva M.A."/>
            <person name="Oakley B.R."/>
            <person name="Momany M."/>
            <person name="Tanaka T."/>
            <person name="Kumagai T."/>
            <person name="Asai K."/>
            <person name="Machida M."/>
            <person name="Nierman W.C."/>
            <person name="Denning D.W."/>
            <person name="Caddick M.X."/>
            <person name="Hynes M."/>
            <person name="Paoletti M."/>
            <person name="Fischer R."/>
            <person name="Miller B.L."/>
            <person name="Dyer P.S."/>
            <person name="Sachs M.S."/>
            <person name="Osmani S.A."/>
            <person name="Birren B.W."/>
        </authorList>
    </citation>
    <scope>NUCLEOTIDE SEQUENCE [LARGE SCALE GENOMIC DNA]</scope>
    <source>
        <strain>FGSC A4 / ATCC 38163 / CBS 112.46 / NRRL 194 / M139</strain>
    </source>
</reference>
<reference key="2">
    <citation type="journal article" date="2009" name="Fungal Genet. Biol.">
        <title>The 2008 update of the Aspergillus nidulans genome annotation: a community effort.</title>
        <authorList>
            <person name="Wortman J.R."/>
            <person name="Gilsenan J.M."/>
            <person name="Joardar V."/>
            <person name="Deegan J."/>
            <person name="Clutterbuck J."/>
            <person name="Andersen M.R."/>
            <person name="Archer D."/>
            <person name="Bencina M."/>
            <person name="Braus G."/>
            <person name="Coutinho P."/>
            <person name="von Dohren H."/>
            <person name="Doonan J."/>
            <person name="Driessen A.J."/>
            <person name="Durek P."/>
            <person name="Espeso E."/>
            <person name="Fekete E."/>
            <person name="Flipphi M."/>
            <person name="Estrada C.G."/>
            <person name="Geysens S."/>
            <person name="Goldman G."/>
            <person name="de Groot P.W."/>
            <person name="Hansen K."/>
            <person name="Harris S.D."/>
            <person name="Heinekamp T."/>
            <person name="Helmstaedt K."/>
            <person name="Henrissat B."/>
            <person name="Hofmann G."/>
            <person name="Homan T."/>
            <person name="Horio T."/>
            <person name="Horiuchi H."/>
            <person name="James S."/>
            <person name="Jones M."/>
            <person name="Karaffa L."/>
            <person name="Karanyi Z."/>
            <person name="Kato M."/>
            <person name="Keller N."/>
            <person name="Kelly D.E."/>
            <person name="Kiel J.A."/>
            <person name="Kim J.M."/>
            <person name="van der Klei I.J."/>
            <person name="Klis F.M."/>
            <person name="Kovalchuk A."/>
            <person name="Krasevec N."/>
            <person name="Kubicek C.P."/>
            <person name="Liu B."/>
            <person name="Maccabe A."/>
            <person name="Meyer V."/>
            <person name="Mirabito P."/>
            <person name="Miskei M."/>
            <person name="Mos M."/>
            <person name="Mullins J."/>
            <person name="Nelson D.R."/>
            <person name="Nielsen J."/>
            <person name="Oakley B.R."/>
            <person name="Osmani S.A."/>
            <person name="Pakula T."/>
            <person name="Paszewski A."/>
            <person name="Paulsen I."/>
            <person name="Pilsyk S."/>
            <person name="Pocsi I."/>
            <person name="Punt P.J."/>
            <person name="Ram A.F."/>
            <person name="Ren Q."/>
            <person name="Robellet X."/>
            <person name="Robson G."/>
            <person name="Seiboth B."/>
            <person name="van Solingen P."/>
            <person name="Specht T."/>
            <person name="Sun J."/>
            <person name="Taheri-Talesh N."/>
            <person name="Takeshita N."/>
            <person name="Ussery D."/>
            <person name="vanKuyk P.A."/>
            <person name="Visser H."/>
            <person name="van de Vondervoort P.J."/>
            <person name="de Vries R.P."/>
            <person name="Walton J."/>
            <person name="Xiang X."/>
            <person name="Xiong Y."/>
            <person name="Zeng A.P."/>
            <person name="Brandt B.W."/>
            <person name="Cornell M.J."/>
            <person name="van den Hondel C.A."/>
            <person name="Visser J."/>
            <person name="Oliver S.G."/>
            <person name="Turner G."/>
        </authorList>
    </citation>
    <scope>GENOME REANNOTATION</scope>
    <source>
        <strain>FGSC A4 / ATCC 38163 / CBS 112.46 / NRRL 194 / M139</strain>
    </source>
</reference>
<evidence type="ECO:0000250" key="1"/>
<evidence type="ECO:0000255" key="2">
    <source>
        <dbReference type="PROSITE-ProRule" id="PRU00176"/>
    </source>
</evidence>
<evidence type="ECO:0000256" key="3">
    <source>
        <dbReference type="SAM" id="MobiDB-lite"/>
    </source>
</evidence>
<evidence type="ECO:0000305" key="4"/>
<comment type="function">
    <text evidence="1">Involved in pre-mRNA splicing. Facilitates the cooperative formation of U2/U6 helix II in association with stem II in the spliceosome. Binds to RNA (By similarity).</text>
</comment>
<comment type="subunit">
    <text evidence="1">Associated with the spliceosome.</text>
</comment>
<comment type="subcellular location">
    <subcellularLocation>
        <location evidence="1">Nucleus</location>
    </subcellularLocation>
</comment>
<comment type="similarity">
    <text evidence="4">Belongs to the SLT11 family.</text>
</comment>
<comment type="sequence caution" evidence="4">
    <conflict type="erroneous gene model prediction">
        <sequence resource="EMBL-CDS" id="EAA61397"/>
    </conflict>
</comment>
<keyword id="KW-0507">mRNA processing</keyword>
<keyword id="KW-0508">mRNA splicing</keyword>
<keyword id="KW-0539">Nucleus</keyword>
<keyword id="KW-1185">Reference proteome</keyword>
<keyword id="KW-0694">RNA-binding</keyword>
<keyword id="KW-0747">Spliceosome</keyword>
<sequence>MPPQIKQDLNRSGWETTDFPSVCENCLPENPYVQMLKEDYGAECKICTRPFTIFRWKADRTARTKRTNICLTCARLKNCCQCCMLDLSFGLPIVVRDAALKMVAPGPQSSINREYYAQGHEKEIEEGRGAVEEYEKTDEKARELLRRLANSEPYYRKPRQLEAPEEDGETQGPSDATVVRSRYGNGPGPVRTSESRRGTPLPGRGRGGVRGGRPFPGTAQLPPSQADILPPADPNITSLFVTGVEDDLPEHALRSFFVQFGQLRSLVCSHRAHCAFINYAARESAEAAAKHCQGKAVVQGCPLRVRWGKPKALDNMDREERLKYAREGRQAVGSLGNADQGTKAITAGTEKEQIPRQVAVAPPPGSGEVQYSSMSGD</sequence>
<organism>
    <name type="scientific">Emericella nidulans (strain FGSC A4 / ATCC 38163 / CBS 112.46 / NRRL 194 / M139)</name>
    <name type="common">Aspergillus nidulans</name>
    <dbReference type="NCBI Taxonomy" id="227321"/>
    <lineage>
        <taxon>Eukaryota</taxon>
        <taxon>Fungi</taxon>
        <taxon>Dikarya</taxon>
        <taxon>Ascomycota</taxon>
        <taxon>Pezizomycotina</taxon>
        <taxon>Eurotiomycetes</taxon>
        <taxon>Eurotiomycetidae</taxon>
        <taxon>Eurotiales</taxon>
        <taxon>Aspergillaceae</taxon>
        <taxon>Aspergillus</taxon>
        <taxon>Aspergillus subgen. Nidulantes</taxon>
    </lineage>
</organism>
<name>SLT11_EMENI</name>
<gene>
    <name type="primary">slt11</name>
    <name type="ORF">AN7145</name>
</gene>
<protein>
    <recommendedName>
        <fullName>Pre-mRNA-splicing factor slt11</fullName>
    </recommendedName>
</protein>
<accession>Q5AX35</accession>
<accession>C8VD80</accession>
<dbReference type="EMBL" id="AACD01000122">
    <property type="protein sequence ID" value="EAA61397.1"/>
    <property type="status" value="ALT_SEQ"/>
    <property type="molecule type" value="Genomic_DNA"/>
</dbReference>
<dbReference type="EMBL" id="BN001304">
    <property type="protein sequence ID" value="CBF78985.1"/>
    <property type="molecule type" value="Genomic_DNA"/>
</dbReference>
<dbReference type="RefSeq" id="XP_664749.1">
    <property type="nucleotide sequence ID" value="XM_659657.1"/>
</dbReference>
<dbReference type="SMR" id="Q5AX35"/>
<dbReference type="FunCoup" id="Q5AX35">
    <property type="interactions" value="125"/>
</dbReference>
<dbReference type="STRING" id="227321.Q5AX35"/>
<dbReference type="EnsemblFungi" id="CBF78985">
    <property type="protein sequence ID" value="CBF78985"/>
    <property type="gene ID" value="ANIA_07145"/>
</dbReference>
<dbReference type="VEuPathDB" id="FungiDB:AN7145"/>
<dbReference type="eggNOG" id="KOG0153">
    <property type="taxonomic scope" value="Eukaryota"/>
</dbReference>
<dbReference type="HOGENOM" id="CLU_027112_1_0_1"/>
<dbReference type="InParanoid" id="Q5AX35"/>
<dbReference type="OMA" id="CPLRVQW"/>
<dbReference type="OrthoDB" id="10259600at2759"/>
<dbReference type="Proteomes" id="UP000000560">
    <property type="component" value="Chromosome IV"/>
</dbReference>
<dbReference type="GO" id="GO:0071014">
    <property type="term" value="C:post-mRNA release spliceosomal complex"/>
    <property type="evidence" value="ECO:0007669"/>
    <property type="project" value="EnsemblFungi"/>
</dbReference>
<dbReference type="GO" id="GO:0000974">
    <property type="term" value="C:Prp19 complex"/>
    <property type="evidence" value="ECO:0000318"/>
    <property type="project" value="GO_Central"/>
</dbReference>
<dbReference type="GO" id="GO:0071006">
    <property type="term" value="C:U2-type catalytic step 1 spliceosome"/>
    <property type="evidence" value="ECO:0000318"/>
    <property type="project" value="GO_Central"/>
</dbReference>
<dbReference type="GO" id="GO:0071007">
    <property type="term" value="C:U2-type catalytic step 2 spliceosome"/>
    <property type="evidence" value="ECO:0000318"/>
    <property type="project" value="GO_Central"/>
</dbReference>
<dbReference type="GO" id="GO:0036002">
    <property type="term" value="F:pre-mRNA binding"/>
    <property type="evidence" value="ECO:0000318"/>
    <property type="project" value="GO_Central"/>
</dbReference>
<dbReference type="GO" id="GO:0017070">
    <property type="term" value="F:U6 snRNA binding"/>
    <property type="evidence" value="ECO:0000318"/>
    <property type="project" value="GO_Central"/>
</dbReference>
<dbReference type="GO" id="GO:0006397">
    <property type="term" value="P:mRNA processing"/>
    <property type="evidence" value="ECO:0007669"/>
    <property type="project" value="UniProtKB-KW"/>
</dbReference>
<dbReference type="GO" id="GO:0008380">
    <property type="term" value="P:RNA splicing"/>
    <property type="evidence" value="ECO:0007669"/>
    <property type="project" value="UniProtKB-KW"/>
</dbReference>
<dbReference type="FunFam" id="3.30.70.330:FF:000396">
    <property type="entry name" value="Putative Pre-mRNA-splicing factor slt11"/>
    <property type="match status" value="1"/>
</dbReference>
<dbReference type="Gene3D" id="3.30.70.330">
    <property type="match status" value="1"/>
</dbReference>
<dbReference type="InterPro" id="IPR039171">
    <property type="entry name" value="Cwc2/Slt11"/>
</dbReference>
<dbReference type="InterPro" id="IPR012677">
    <property type="entry name" value="Nucleotide-bd_a/b_plait_sf"/>
</dbReference>
<dbReference type="InterPro" id="IPR035979">
    <property type="entry name" value="RBD_domain_sf"/>
</dbReference>
<dbReference type="InterPro" id="IPR000504">
    <property type="entry name" value="RRM_dom"/>
</dbReference>
<dbReference type="InterPro" id="IPR048995">
    <property type="entry name" value="STL11/RBM22-like_N"/>
</dbReference>
<dbReference type="PANTHER" id="PTHR14089">
    <property type="entry name" value="PRE-MRNA-SPLICING FACTOR RBM22"/>
    <property type="match status" value="1"/>
</dbReference>
<dbReference type="PANTHER" id="PTHR14089:SF6">
    <property type="entry name" value="PRE-MRNA-SPLICING FACTOR RBM22"/>
    <property type="match status" value="1"/>
</dbReference>
<dbReference type="Pfam" id="PF00076">
    <property type="entry name" value="RRM_1"/>
    <property type="match status" value="1"/>
</dbReference>
<dbReference type="Pfam" id="PF21369">
    <property type="entry name" value="STL11_N"/>
    <property type="match status" value="1"/>
</dbReference>
<dbReference type="SMART" id="SM00360">
    <property type="entry name" value="RRM"/>
    <property type="match status" value="1"/>
</dbReference>
<dbReference type="SUPFAM" id="SSF54928">
    <property type="entry name" value="RNA-binding domain, RBD"/>
    <property type="match status" value="1"/>
</dbReference>
<dbReference type="PROSITE" id="PS50102">
    <property type="entry name" value="RRM"/>
    <property type="match status" value="1"/>
</dbReference>